<organism>
    <name type="scientific">Yersinia pestis</name>
    <dbReference type="NCBI Taxonomy" id="632"/>
    <lineage>
        <taxon>Bacteria</taxon>
        <taxon>Pseudomonadati</taxon>
        <taxon>Pseudomonadota</taxon>
        <taxon>Gammaproteobacteria</taxon>
        <taxon>Enterobacterales</taxon>
        <taxon>Yersiniaceae</taxon>
        <taxon>Yersinia</taxon>
    </lineage>
</organism>
<comment type="function">
    <text evidence="2">Involved in base excision repair of DNA damaged by oxidation or by mutagenic agents. Acts as a DNA glycosylase that recognizes and removes damaged bases. Has a preference for oxidized purines, such as 7,8-dihydro-8-oxoguanine (8-oxoG). Has AP (apurinic/apyrimidinic) lyase activity and introduces nicks in the DNA strand. Cleaves the DNA backbone by beta-delta elimination to generate a single-strand break at the site of the removed base with both 3'- and 5'-phosphates.</text>
</comment>
<comment type="catalytic activity">
    <reaction evidence="2">
        <text>Hydrolysis of DNA containing ring-opened 7-methylguanine residues, releasing 2,6-diamino-4-hydroxy-5-(N-methyl)formamidopyrimidine.</text>
        <dbReference type="EC" id="3.2.2.23"/>
    </reaction>
</comment>
<comment type="catalytic activity">
    <reaction evidence="2">
        <text>2'-deoxyribonucleotide-(2'-deoxyribose 5'-phosphate)-2'-deoxyribonucleotide-DNA = a 3'-end 2'-deoxyribonucleotide-(2,3-dehydro-2,3-deoxyribose 5'-phosphate)-DNA + a 5'-end 5'-phospho-2'-deoxyribonucleoside-DNA + H(+)</text>
        <dbReference type="Rhea" id="RHEA:66592"/>
        <dbReference type="Rhea" id="RHEA-COMP:13180"/>
        <dbReference type="Rhea" id="RHEA-COMP:16897"/>
        <dbReference type="Rhea" id="RHEA-COMP:17067"/>
        <dbReference type="ChEBI" id="CHEBI:15378"/>
        <dbReference type="ChEBI" id="CHEBI:136412"/>
        <dbReference type="ChEBI" id="CHEBI:157695"/>
        <dbReference type="ChEBI" id="CHEBI:167181"/>
        <dbReference type="EC" id="4.2.99.18"/>
    </reaction>
</comment>
<comment type="cofactor">
    <cofactor evidence="2">
        <name>Zn(2+)</name>
        <dbReference type="ChEBI" id="CHEBI:29105"/>
    </cofactor>
    <text evidence="2">Binds 1 zinc ion per subunit.</text>
</comment>
<comment type="subunit">
    <text evidence="2">Monomer.</text>
</comment>
<comment type="similarity">
    <text evidence="2">Belongs to the FPG family.</text>
</comment>
<accession>Q8ZJP0</accession>
<accession>Q0WKP0</accession>
<feature type="initiator methionine" description="Removed" evidence="1">
    <location>
        <position position="1"/>
    </location>
</feature>
<feature type="chain" id="PRO_0000170890" description="Formamidopyrimidine-DNA glycosylase">
    <location>
        <begin position="2"/>
        <end position="269"/>
    </location>
</feature>
<feature type="zinc finger region" description="FPG-type" evidence="2">
    <location>
        <begin position="235"/>
        <end position="269"/>
    </location>
</feature>
<feature type="active site" description="Schiff-base intermediate with DNA" evidence="2">
    <location>
        <position position="2"/>
    </location>
</feature>
<feature type="active site" description="Proton donor" evidence="2">
    <location>
        <position position="3"/>
    </location>
</feature>
<feature type="active site" description="Proton donor; for beta-elimination activity" evidence="2">
    <location>
        <position position="57"/>
    </location>
</feature>
<feature type="active site" description="Proton donor; for delta-elimination activity" evidence="2">
    <location>
        <position position="259"/>
    </location>
</feature>
<feature type="binding site" evidence="2">
    <location>
        <position position="90"/>
    </location>
    <ligand>
        <name>DNA</name>
        <dbReference type="ChEBI" id="CHEBI:16991"/>
    </ligand>
</feature>
<feature type="binding site" evidence="2">
    <location>
        <position position="109"/>
    </location>
    <ligand>
        <name>DNA</name>
        <dbReference type="ChEBI" id="CHEBI:16991"/>
    </ligand>
</feature>
<feature type="binding site" evidence="2">
    <location>
        <position position="150"/>
    </location>
    <ligand>
        <name>DNA</name>
        <dbReference type="ChEBI" id="CHEBI:16991"/>
    </ligand>
</feature>
<keyword id="KW-0227">DNA damage</keyword>
<keyword id="KW-0234">DNA repair</keyword>
<keyword id="KW-0238">DNA-binding</keyword>
<keyword id="KW-0326">Glycosidase</keyword>
<keyword id="KW-0378">Hydrolase</keyword>
<keyword id="KW-0456">Lyase</keyword>
<keyword id="KW-0479">Metal-binding</keyword>
<keyword id="KW-0511">Multifunctional enzyme</keyword>
<keyword id="KW-1185">Reference proteome</keyword>
<keyword id="KW-0862">Zinc</keyword>
<keyword id="KW-0863">Zinc-finger</keyword>
<evidence type="ECO:0000250" key="1"/>
<evidence type="ECO:0000255" key="2">
    <source>
        <dbReference type="HAMAP-Rule" id="MF_00103"/>
    </source>
</evidence>
<name>FPG_YERPE</name>
<reference key="1">
    <citation type="journal article" date="2001" name="Nature">
        <title>Genome sequence of Yersinia pestis, the causative agent of plague.</title>
        <authorList>
            <person name="Parkhill J."/>
            <person name="Wren B.W."/>
            <person name="Thomson N.R."/>
            <person name="Titball R.W."/>
            <person name="Holden M.T.G."/>
            <person name="Prentice M.B."/>
            <person name="Sebaihia M."/>
            <person name="James K.D."/>
            <person name="Churcher C.M."/>
            <person name="Mungall K.L."/>
            <person name="Baker S."/>
            <person name="Basham D."/>
            <person name="Bentley S.D."/>
            <person name="Brooks K."/>
            <person name="Cerdeno-Tarraga A.-M."/>
            <person name="Chillingworth T."/>
            <person name="Cronin A."/>
            <person name="Davies R.M."/>
            <person name="Davis P."/>
            <person name="Dougan G."/>
            <person name="Feltwell T."/>
            <person name="Hamlin N."/>
            <person name="Holroyd S."/>
            <person name="Jagels K."/>
            <person name="Karlyshev A.V."/>
            <person name="Leather S."/>
            <person name="Moule S."/>
            <person name="Oyston P.C.F."/>
            <person name="Quail M.A."/>
            <person name="Rutherford K.M."/>
            <person name="Simmonds M."/>
            <person name="Skelton J."/>
            <person name="Stevens K."/>
            <person name="Whitehead S."/>
            <person name="Barrell B.G."/>
        </authorList>
    </citation>
    <scope>NUCLEOTIDE SEQUENCE [LARGE SCALE GENOMIC DNA]</scope>
    <source>
        <strain>CO-92 / Biovar Orientalis</strain>
    </source>
</reference>
<reference key="2">
    <citation type="journal article" date="2002" name="J. Bacteriol.">
        <title>Genome sequence of Yersinia pestis KIM.</title>
        <authorList>
            <person name="Deng W."/>
            <person name="Burland V."/>
            <person name="Plunkett G. III"/>
            <person name="Boutin A."/>
            <person name="Mayhew G.F."/>
            <person name="Liss P."/>
            <person name="Perna N.T."/>
            <person name="Rose D.J."/>
            <person name="Mau B."/>
            <person name="Zhou S."/>
            <person name="Schwartz D.C."/>
            <person name="Fetherston J.D."/>
            <person name="Lindler L.E."/>
            <person name="Brubaker R.R."/>
            <person name="Plano G.V."/>
            <person name="Straley S.C."/>
            <person name="McDonough K.A."/>
            <person name="Nilles M.L."/>
            <person name="Matson J.S."/>
            <person name="Blattner F.R."/>
            <person name="Perry R.D."/>
        </authorList>
    </citation>
    <scope>NUCLEOTIDE SEQUENCE [LARGE SCALE GENOMIC DNA]</scope>
    <source>
        <strain>KIM10+ / Biovar Mediaevalis</strain>
    </source>
</reference>
<reference key="3">
    <citation type="journal article" date="2004" name="DNA Res.">
        <title>Complete genome sequence of Yersinia pestis strain 91001, an isolate avirulent to humans.</title>
        <authorList>
            <person name="Song Y."/>
            <person name="Tong Z."/>
            <person name="Wang J."/>
            <person name="Wang L."/>
            <person name="Guo Z."/>
            <person name="Han Y."/>
            <person name="Zhang J."/>
            <person name="Pei D."/>
            <person name="Zhou D."/>
            <person name="Qin H."/>
            <person name="Pang X."/>
            <person name="Han Y."/>
            <person name="Zhai J."/>
            <person name="Li M."/>
            <person name="Cui B."/>
            <person name="Qi Z."/>
            <person name="Jin L."/>
            <person name="Dai R."/>
            <person name="Chen F."/>
            <person name="Li S."/>
            <person name="Ye C."/>
            <person name="Du Z."/>
            <person name="Lin W."/>
            <person name="Wang J."/>
            <person name="Yu J."/>
            <person name="Yang H."/>
            <person name="Wang J."/>
            <person name="Huang P."/>
            <person name="Yang R."/>
        </authorList>
    </citation>
    <scope>NUCLEOTIDE SEQUENCE [LARGE SCALE GENOMIC DNA]</scope>
    <source>
        <strain>91001 / Biovar Mediaevalis</strain>
    </source>
</reference>
<gene>
    <name evidence="2" type="primary">mutM</name>
    <name evidence="2" type="synonym">fpg</name>
    <name type="ordered locus">YPO0052</name>
    <name type="ordered locus">y0090</name>
    <name type="ordered locus">YP_0053</name>
</gene>
<sequence>MPELPEVETSRRGIEPYLVGQTILYAVVRNARLRWPVSDEILTLSDQPVLSVQRRAKYLLLELPKGWIIIHLGMSGSLRVLSEETAAEKHDHVDLVVSNGKILRYTDPRRFGAWLWAKDLETSNVLAHLGPEPLSDEFTAQYLFDKSRNKRTLIKPWLMDNKVVVGVGNIYASESLFAAGILPDRAAGSLTDAESVLLVATIKAVLLHSIEQGGTTLRDFLQSDGKPGYFAQELQVYGRAGEPCRQCGHPIEIAKHGQRSTFFCRHCQH</sequence>
<dbReference type="EC" id="3.2.2.23" evidence="2"/>
<dbReference type="EC" id="4.2.99.18" evidence="2"/>
<dbReference type="EMBL" id="AL590842">
    <property type="protein sequence ID" value="CAL18742.1"/>
    <property type="molecule type" value="Genomic_DNA"/>
</dbReference>
<dbReference type="EMBL" id="AE009952">
    <property type="protein sequence ID" value="AAM83683.1"/>
    <property type="molecule type" value="Genomic_DNA"/>
</dbReference>
<dbReference type="EMBL" id="AE017042">
    <property type="protein sequence ID" value="AAS60334.1"/>
    <property type="molecule type" value="Genomic_DNA"/>
</dbReference>
<dbReference type="PIR" id="AE0007">
    <property type="entry name" value="AE0007"/>
</dbReference>
<dbReference type="RefSeq" id="WP_002208989.1">
    <property type="nucleotide sequence ID" value="NZ_WUCM01000015.1"/>
</dbReference>
<dbReference type="RefSeq" id="YP_002345148.1">
    <property type="nucleotide sequence ID" value="NC_003143.1"/>
</dbReference>
<dbReference type="SMR" id="Q8ZJP0"/>
<dbReference type="STRING" id="214092.YPO0052"/>
<dbReference type="PaxDb" id="214092-YPO0052"/>
<dbReference type="DNASU" id="1145036"/>
<dbReference type="EnsemblBacteria" id="AAS60334">
    <property type="protein sequence ID" value="AAS60334"/>
    <property type="gene ID" value="YP_0053"/>
</dbReference>
<dbReference type="GeneID" id="57974538"/>
<dbReference type="KEGG" id="ype:YPO0052"/>
<dbReference type="KEGG" id="ypk:y0090"/>
<dbReference type="KEGG" id="ypm:YP_0053"/>
<dbReference type="PATRIC" id="fig|214092.21.peg.275"/>
<dbReference type="eggNOG" id="COG0266">
    <property type="taxonomic scope" value="Bacteria"/>
</dbReference>
<dbReference type="HOGENOM" id="CLU_038423_1_1_6"/>
<dbReference type="OMA" id="WMNRSSY"/>
<dbReference type="OrthoDB" id="9800855at2"/>
<dbReference type="Proteomes" id="UP000000815">
    <property type="component" value="Chromosome"/>
</dbReference>
<dbReference type="Proteomes" id="UP000001019">
    <property type="component" value="Chromosome"/>
</dbReference>
<dbReference type="Proteomes" id="UP000002490">
    <property type="component" value="Chromosome"/>
</dbReference>
<dbReference type="GO" id="GO:0034039">
    <property type="term" value="F:8-oxo-7,8-dihydroguanine DNA N-glycosylase activity"/>
    <property type="evidence" value="ECO:0000318"/>
    <property type="project" value="GO_Central"/>
</dbReference>
<dbReference type="GO" id="GO:0140078">
    <property type="term" value="F:class I DNA-(apurinic or apyrimidinic site) endonuclease activity"/>
    <property type="evidence" value="ECO:0007669"/>
    <property type="project" value="UniProtKB-EC"/>
</dbReference>
<dbReference type="GO" id="GO:0003684">
    <property type="term" value="F:damaged DNA binding"/>
    <property type="evidence" value="ECO:0007669"/>
    <property type="project" value="InterPro"/>
</dbReference>
<dbReference type="GO" id="GO:0003906">
    <property type="term" value="F:DNA-(apurinic or apyrimidinic site) endonuclease activity"/>
    <property type="evidence" value="ECO:0000318"/>
    <property type="project" value="GO_Central"/>
</dbReference>
<dbReference type="GO" id="GO:0008270">
    <property type="term" value="F:zinc ion binding"/>
    <property type="evidence" value="ECO:0007669"/>
    <property type="project" value="UniProtKB-UniRule"/>
</dbReference>
<dbReference type="GO" id="GO:0006284">
    <property type="term" value="P:base-excision repair"/>
    <property type="evidence" value="ECO:0000318"/>
    <property type="project" value="GO_Central"/>
</dbReference>
<dbReference type="CDD" id="cd08966">
    <property type="entry name" value="EcFpg-like_N"/>
    <property type="match status" value="1"/>
</dbReference>
<dbReference type="FunFam" id="1.10.8.50:FF:000003">
    <property type="entry name" value="Formamidopyrimidine-DNA glycosylase"/>
    <property type="match status" value="1"/>
</dbReference>
<dbReference type="FunFam" id="3.20.190.10:FF:000001">
    <property type="entry name" value="Formamidopyrimidine-DNA glycosylase"/>
    <property type="match status" value="1"/>
</dbReference>
<dbReference type="Gene3D" id="1.10.8.50">
    <property type="match status" value="1"/>
</dbReference>
<dbReference type="Gene3D" id="3.20.190.10">
    <property type="entry name" value="MutM-like, N-terminal"/>
    <property type="match status" value="1"/>
</dbReference>
<dbReference type="HAMAP" id="MF_00103">
    <property type="entry name" value="Fapy_DNA_glycosyl"/>
    <property type="match status" value="1"/>
</dbReference>
<dbReference type="InterPro" id="IPR015886">
    <property type="entry name" value="DNA_glyclase/AP_lyase_DNA-bd"/>
</dbReference>
<dbReference type="InterPro" id="IPR015887">
    <property type="entry name" value="DNA_glyclase_Znf_dom_DNA_BS"/>
</dbReference>
<dbReference type="InterPro" id="IPR020629">
    <property type="entry name" value="Formamido-pyr_DNA_Glyclase"/>
</dbReference>
<dbReference type="InterPro" id="IPR012319">
    <property type="entry name" value="FPG_cat"/>
</dbReference>
<dbReference type="InterPro" id="IPR035937">
    <property type="entry name" value="MutM-like_N-ter"/>
</dbReference>
<dbReference type="InterPro" id="IPR010979">
    <property type="entry name" value="Ribosomal_uS13-like_H2TH"/>
</dbReference>
<dbReference type="InterPro" id="IPR000214">
    <property type="entry name" value="Znf_DNA_glyclase/AP_lyase"/>
</dbReference>
<dbReference type="InterPro" id="IPR010663">
    <property type="entry name" value="Znf_FPG/IleRS"/>
</dbReference>
<dbReference type="NCBIfam" id="TIGR00577">
    <property type="entry name" value="fpg"/>
    <property type="match status" value="1"/>
</dbReference>
<dbReference type="NCBIfam" id="NF002211">
    <property type="entry name" value="PRK01103.1"/>
    <property type="match status" value="1"/>
</dbReference>
<dbReference type="PANTHER" id="PTHR22993">
    <property type="entry name" value="FORMAMIDOPYRIMIDINE-DNA GLYCOSYLASE"/>
    <property type="match status" value="1"/>
</dbReference>
<dbReference type="PANTHER" id="PTHR22993:SF9">
    <property type="entry name" value="FORMAMIDOPYRIMIDINE-DNA GLYCOSYLASE"/>
    <property type="match status" value="1"/>
</dbReference>
<dbReference type="Pfam" id="PF01149">
    <property type="entry name" value="Fapy_DNA_glyco"/>
    <property type="match status" value="1"/>
</dbReference>
<dbReference type="Pfam" id="PF06831">
    <property type="entry name" value="H2TH"/>
    <property type="match status" value="1"/>
</dbReference>
<dbReference type="Pfam" id="PF06827">
    <property type="entry name" value="zf-FPG_IleRS"/>
    <property type="match status" value="1"/>
</dbReference>
<dbReference type="SMART" id="SM00898">
    <property type="entry name" value="Fapy_DNA_glyco"/>
    <property type="match status" value="1"/>
</dbReference>
<dbReference type="SMART" id="SM01232">
    <property type="entry name" value="H2TH"/>
    <property type="match status" value="1"/>
</dbReference>
<dbReference type="SUPFAM" id="SSF57716">
    <property type="entry name" value="Glucocorticoid receptor-like (DNA-binding domain)"/>
    <property type="match status" value="1"/>
</dbReference>
<dbReference type="SUPFAM" id="SSF81624">
    <property type="entry name" value="N-terminal domain of MutM-like DNA repair proteins"/>
    <property type="match status" value="1"/>
</dbReference>
<dbReference type="SUPFAM" id="SSF46946">
    <property type="entry name" value="S13-like H2TH domain"/>
    <property type="match status" value="1"/>
</dbReference>
<dbReference type="PROSITE" id="PS51068">
    <property type="entry name" value="FPG_CAT"/>
    <property type="match status" value="1"/>
</dbReference>
<dbReference type="PROSITE" id="PS01242">
    <property type="entry name" value="ZF_FPG_1"/>
    <property type="match status" value="1"/>
</dbReference>
<dbReference type="PROSITE" id="PS51066">
    <property type="entry name" value="ZF_FPG_2"/>
    <property type="match status" value="1"/>
</dbReference>
<proteinExistence type="inferred from homology"/>
<protein>
    <recommendedName>
        <fullName evidence="2">Formamidopyrimidine-DNA glycosylase</fullName>
        <shortName evidence="2">Fapy-DNA glycosylase</shortName>
        <ecNumber evidence="2">3.2.2.23</ecNumber>
    </recommendedName>
    <alternativeName>
        <fullName evidence="2">DNA-(apurinic or apyrimidinic site) lyase MutM</fullName>
        <shortName evidence="2">AP lyase MutM</shortName>
        <ecNumber evidence="2">4.2.99.18</ecNumber>
    </alternativeName>
</protein>